<feature type="chain" id="PRO_0000304230" description="Porphobilinogen deaminase">
    <location>
        <begin position="1"/>
        <end position="302"/>
    </location>
</feature>
<feature type="modified residue" description="S-(dipyrrolylmethanemethyl)cysteine" evidence="1">
    <location>
        <position position="234"/>
    </location>
</feature>
<reference key="1">
    <citation type="journal article" date="2007" name="Microbiology">
        <title>Comparative analysis of the Corynebacterium glutamicum group and complete genome sequence of strain R.</title>
        <authorList>
            <person name="Yukawa H."/>
            <person name="Omumasaba C.A."/>
            <person name="Nonaka H."/>
            <person name="Kos P."/>
            <person name="Okai N."/>
            <person name="Suzuki N."/>
            <person name="Suda M."/>
            <person name="Tsuge Y."/>
            <person name="Watanabe J."/>
            <person name="Ikeda Y."/>
            <person name="Vertes A.A."/>
            <person name="Inui M."/>
        </authorList>
    </citation>
    <scope>NUCLEOTIDE SEQUENCE [LARGE SCALE GENOMIC DNA]</scope>
    <source>
        <strain>R</strain>
    </source>
</reference>
<evidence type="ECO:0000255" key="1">
    <source>
        <dbReference type="HAMAP-Rule" id="MF_00260"/>
    </source>
</evidence>
<organism>
    <name type="scientific">Corynebacterium glutamicum (strain R)</name>
    <dbReference type="NCBI Taxonomy" id="340322"/>
    <lineage>
        <taxon>Bacteria</taxon>
        <taxon>Bacillati</taxon>
        <taxon>Actinomycetota</taxon>
        <taxon>Actinomycetes</taxon>
        <taxon>Mycobacteriales</taxon>
        <taxon>Corynebacteriaceae</taxon>
        <taxon>Corynebacterium</taxon>
    </lineage>
</organism>
<gene>
    <name evidence="1" type="primary">hemC</name>
    <name type="ordered locus">cgR_0489</name>
</gene>
<dbReference type="EC" id="2.5.1.61" evidence="1"/>
<dbReference type="EMBL" id="AP009044">
    <property type="protein sequence ID" value="BAF53456.1"/>
    <property type="molecule type" value="Genomic_DNA"/>
</dbReference>
<dbReference type="RefSeq" id="WP_003855548.1">
    <property type="nucleotide sequence ID" value="NC_009342.1"/>
</dbReference>
<dbReference type="SMR" id="A4QB59"/>
<dbReference type="KEGG" id="cgt:cgR_0489"/>
<dbReference type="HOGENOM" id="CLU_019704_1_0_11"/>
<dbReference type="PhylomeDB" id="A4QB59"/>
<dbReference type="UniPathway" id="UPA00251">
    <property type="reaction ID" value="UER00319"/>
</dbReference>
<dbReference type="Proteomes" id="UP000006698">
    <property type="component" value="Chromosome"/>
</dbReference>
<dbReference type="GO" id="GO:0005737">
    <property type="term" value="C:cytoplasm"/>
    <property type="evidence" value="ECO:0007669"/>
    <property type="project" value="TreeGrafter"/>
</dbReference>
<dbReference type="GO" id="GO:0004418">
    <property type="term" value="F:hydroxymethylbilane synthase activity"/>
    <property type="evidence" value="ECO:0007669"/>
    <property type="project" value="UniProtKB-UniRule"/>
</dbReference>
<dbReference type="GO" id="GO:0006782">
    <property type="term" value="P:protoporphyrinogen IX biosynthetic process"/>
    <property type="evidence" value="ECO:0007669"/>
    <property type="project" value="UniProtKB-UniRule"/>
</dbReference>
<dbReference type="FunFam" id="3.40.190.10:FF:000005">
    <property type="entry name" value="Porphobilinogen deaminase"/>
    <property type="match status" value="1"/>
</dbReference>
<dbReference type="Gene3D" id="3.40.190.10">
    <property type="entry name" value="Periplasmic binding protein-like II"/>
    <property type="match status" value="2"/>
</dbReference>
<dbReference type="Gene3D" id="3.30.160.40">
    <property type="entry name" value="Porphobilinogen deaminase, C-terminal domain"/>
    <property type="match status" value="1"/>
</dbReference>
<dbReference type="HAMAP" id="MF_00260">
    <property type="entry name" value="Porphobil_deam"/>
    <property type="match status" value="1"/>
</dbReference>
<dbReference type="InterPro" id="IPR000860">
    <property type="entry name" value="HemC"/>
</dbReference>
<dbReference type="InterPro" id="IPR022419">
    <property type="entry name" value="Porphobilin_deaminase_cofac_BS"/>
</dbReference>
<dbReference type="InterPro" id="IPR022417">
    <property type="entry name" value="Porphobilin_deaminase_N"/>
</dbReference>
<dbReference type="InterPro" id="IPR022418">
    <property type="entry name" value="Porphobilinogen_deaminase_C"/>
</dbReference>
<dbReference type="InterPro" id="IPR036803">
    <property type="entry name" value="Porphobilinogen_deaminase_C_sf"/>
</dbReference>
<dbReference type="NCBIfam" id="TIGR00212">
    <property type="entry name" value="hemC"/>
    <property type="match status" value="1"/>
</dbReference>
<dbReference type="PANTHER" id="PTHR11557">
    <property type="entry name" value="PORPHOBILINOGEN DEAMINASE"/>
    <property type="match status" value="1"/>
</dbReference>
<dbReference type="PANTHER" id="PTHR11557:SF0">
    <property type="entry name" value="PORPHOBILINOGEN DEAMINASE"/>
    <property type="match status" value="1"/>
</dbReference>
<dbReference type="Pfam" id="PF01379">
    <property type="entry name" value="Porphobil_deam"/>
    <property type="match status" value="1"/>
</dbReference>
<dbReference type="Pfam" id="PF03900">
    <property type="entry name" value="Porphobil_deamC"/>
    <property type="match status" value="1"/>
</dbReference>
<dbReference type="PIRSF" id="PIRSF001438">
    <property type="entry name" value="4pyrrol_synth_OHMeBilane_synth"/>
    <property type="match status" value="1"/>
</dbReference>
<dbReference type="PRINTS" id="PR00151">
    <property type="entry name" value="PORPHBDMNASE"/>
</dbReference>
<dbReference type="SUPFAM" id="SSF53850">
    <property type="entry name" value="Periplasmic binding protein-like II"/>
    <property type="match status" value="1"/>
</dbReference>
<dbReference type="SUPFAM" id="SSF54782">
    <property type="entry name" value="Porphobilinogen deaminase (hydroxymethylbilane synthase), C-terminal domain"/>
    <property type="match status" value="1"/>
</dbReference>
<dbReference type="PROSITE" id="PS00533">
    <property type="entry name" value="PORPHOBILINOGEN_DEAM"/>
    <property type="match status" value="1"/>
</dbReference>
<keyword id="KW-0627">Porphyrin biosynthesis</keyword>
<keyword id="KW-0808">Transferase</keyword>
<sequence length="302" mass="31973">MTLKIGTRGSKLATTQAGTIRDQLKYFGRDAELHIVTTPGDVNMSPVERIGVGVFTQALRDVLHAGECDVAVHSMKDLPTAADPRFHLVVPTRADSREALIARDGLTLAELPEGAKVGTSAPRRISQLKAIRPDLEILPLRGNIDTRMGKVTSGELDAVMLAYAGLTRVGMQDRATEVFDADIIMPAPAQGALAIECRADDTETVRALNMLMHADTFVSAVAERTVLNRLEAGCTAPVAAHATLDGYSGDTMTLTAGVYALDGSDQLVFSAEGDGARPEELGELVAQQLIDAGAANLLGDRS</sequence>
<accession>A4QB59</accession>
<protein>
    <recommendedName>
        <fullName evidence="1">Porphobilinogen deaminase</fullName>
        <shortName evidence="1">PBG</shortName>
        <ecNumber evidence="1">2.5.1.61</ecNumber>
    </recommendedName>
    <alternativeName>
        <fullName evidence="1">Hydroxymethylbilane synthase</fullName>
        <shortName evidence="1">HMBS</shortName>
    </alternativeName>
    <alternativeName>
        <fullName evidence="1">Pre-uroporphyrinogen synthase</fullName>
    </alternativeName>
</protein>
<name>HEM3_CORGB</name>
<proteinExistence type="inferred from homology"/>
<comment type="function">
    <text evidence="1">Tetrapolymerization of the monopyrrole PBG into the hydroxymethylbilane pre-uroporphyrinogen in several discrete steps.</text>
</comment>
<comment type="catalytic activity">
    <reaction evidence="1">
        <text>4 porphobilinogen + H2O = hydroxymethylbilane + 4 NH4(+)</text>
        <dbReference type="Rhea" id="RHEA:13185"/>
        <dbReference type="ChEBI" id="CHEBI:15377"/>
        <dbReference type="ChEBI" id="CHEBI:28938"/>
        <dbReference type="ChEBI" id="CHEBI:57845"/>
        <dbReference type="ChEBI" id="CHEBI:58126"/>
        <dbReference type="EC" id="2.5.1.61"/>
    </reaction>
</comment>
<comment type="cofactor">
    <cofactor evidence="1">
        <name>dipyrromethane</name>
        <dbReference type="ChEBI" id="CHEBI:60342"/>
    </cofactor>
    <text evidence="1">Binds 1 dipyrromethane group covalently.</text>
</comment>
<comment type="pathway">
    <text evidence="1">Porphyrin-containing compound metabolism; protoporphyrin-IX biosynthesis; coproporphyrinogen-III from 5-aminolevulinate: step 2/4.</text>
</comment>
<comment type="subunit">
    <text evidence="1">Monomer.</text>
</comment>
<comment type="miscellaneous">
    <text evidence="1">The porphobilinogen subunits are added to the dipyrromethane group.</text>
</comment>
<comment type="similarity">
    <text evidence="1">Belongs to the HMBS family.</text>
</comment>